<proteinExistence type="evidence at protein level"/>
<evidence type="ECO:0000250" key="1">
    <source>
        <dbReference type="UniProtKB" id="P08123"/>
    </source>
</evidence>
<evidence type="ECO:0000256" key="2">
    <source>
        <dbReference type="SAM" id="MobiDB-lite"/>
    </source>
</evidence>
<evidence type="ECO:0000269" key="3">
    <source>
    </source>
</evidence>
<evidence type="ECO:0000303" key="4">
    <source>
    </source>
</evidence>
<evidence type="ECO:0000305" key="5"/>
<keyword id="KW-0903">Direct protein sequencing</keyword>
<keyword id="KW-0952">Extinct organism protein</keyword>
<keyword id="KW-0272">Extracellular matrix</keyword>
<keyword id="KW-0325">Glycoprotein</keyword>
<keyword id="KW-0379">Hydroxylation</keyword>
<keyword id="KW-0964">Secreted</keyword>
<dbReference type="GO" id="GO:0005576">
    <property type="term" value="C:extracellular region"/>
    <property type="evidence" value="ECO:0007669"/>
    <property type="project" value="UniProtKB-SubCell"/>
</dbReference>
<dbReference type="InterPro" id="IPR008160">
    <property type="entry name" value="Collagen"/>
</dbReference>
<dbReference type="InterPro" id="IPR050938">
    <property type="entry name" value="Collagen_Structural_Proteins"/>
</dbReference>
<dbReference type="PANTHER" id="PTHR37456:SF6">
    <property type="entry name" value="COLLAGEN ALPHA-1(XXIII) CHAIN-LIKE ISOFORM X2"/>
    <property type="match status" value="1"/>
</dbReference>
<dbReference type="PANTHER" id="PTHR37456">
    <property type="entry name" value="SI:CH211-266K2.1"/>
    <property type="match status" value="1"/>
</dbReference>
<dbReference type="Pfam" id="PF01391">
    <property type="entry name" value="Collagen"/>
    <property type="match status" value="6"/>
</dbReference>
<protein>
    <recommendedName>
        <fullName evidence="4">Collagen alpha-2(I) chain</fullName>
    </recommendedName>
    <alternativeName>
        <fullName evidence="1">Alpha-2 type I collagen</fullName>
    </alternativeName>
</protein>
<comment type="function">
    <text evidence="5">Type I collagen is a member of group I collagen (fibrillar forming collagen).</text>
</comment>
<comment type="subunit">
    <text evidence="1">Trimers of one alpha 2(I) and two alpha 1(I) chains. Interacts (via C-terminus) with TMEM131 (via PapD-L domain); the interaction is direct and is involved in assembly and TRAPPIII ER-to-Golgi transport complex-dependent secretion of collagen.</text>
</comment>
<comment type="subcellular location">
    <subcellularLocation>
        <location>Secreted</location>
    </subcellularLocation>
    <subcellularLocation>
        <location>Secreted</location>
        <location>Extracellular space</location>
    </subcellularLocation>
    <subcellularLocation>
        <location evidence="5">Secreted</location>
        <location evidence="5">Extracellular space</location>
        <location evidence="5">Extracellular matrix</location>
    </subcellularLocation>
</comment>
<comment type="tissue specificity">
    <text evidence="3">Expressed in bones.</text>
</comment>
<comment type="PTM">
    <text evidence="1">Prolines at the third position of the tripeptide repeating unit (G-X-Y) are hydroxylated in some or all of the chains.</text>
</comment>
<comment type="miscellaneous">
    <text evidence="3">These protein fragments were extracted from an ancient femur bone collected in Roseburgh, Oregon, USA.</text>
</comment>
<comment type="similarity">
    <text evidence="5">Belongs to the fibrillar collagen family.</text>
</comment>
<name>CO1A2_PARHA</name>
<sequence length="1041" mass="93673">SGGFDFSFLPQPPQEKAHDGGRYYLGPGPMGLMGPRGPPGASGAPGPQGFGPAGEPGEPGQTGPAGARGPAGPPGKAGEDGHPGKPGRPGERGVVGPQGARGFPGTPGLPGFKGIRGHNGLDGLKGQPGAPGVKGEPGAPGENGTPGQTGARGLPGERGRVGAPGPAGRGSDGSVGPVGPAGPIGSAGPPGFPGAPGPKGELGPVGNTGPSGPAGPRGEQGLPGVSGPVGPPGNPGANGLTGAKGAAGLPGVAGAPGLPGPRGIPGPVGASGATGARGLVGEPGPAGSKGESGGKGEPGSAGPQGPPGSSGEEGKRGPSGESGSTGPTGPPGLRGGPGSRGLPGADGRAGVIGPAGARGASGPAGVRGPSGDTGRPGEPGLMGARGLPGSPGNVGPAGKEGPAGLPGIDGRPGPIGPAGARGEAGNIGFPGPKGPAGDPGKAGEKGHAGLAGNRGAGAQGPPGLQGVQGGKGEQGPAGPPGFQGLPGPAGTTGEVGKPGERGIPGEFGLPGPAGPRGERGPSGESGAVGPSGAIGSRGPSGPPGPDGNKGEPGVVGAPGTAGPAGSGGLPGERGAAGIPGGKGEKGETGLRGEVGTTGRDGARGAPGAVGAPGPAGATGDRGEAGAAGPAGPAGPRGSPGERGEVGPAGPNGFAGPAGAAGQPGAKGERGTKGPKGENGIVGPTGPVGSAGPAGPNGPAGPAGSRGDGGPPGVTGFPGAAGRTGPPGPSGITGPPGPPGAAGKEGLRGPRGDQGPVGRGETGAGGPPGFTGEKGPSGEPGTAGPPGTAGPQGLLGAPGILGLPGSRGERGLPGVAGAVGEPGPLGIGPPGARGPSGGVPGVNGAPGEAGRDGNPGSDGPPGRDGLPGHKGERGYAGNPGPVGAAGAPGPQGVGPVGKHGNRGEPGPVGSAGPVGALGPRGPSGPQGIRGDKGEAGDKGPRGLPGLKGHNGLQGLPGLAGQHGDQGPGPVGPAGPRGPAGPSGPPGKDGRTGHPGAVGPAGIRGSQGSQGPSGPAGPPGPPGPPGASGGGYDFGYEGDFYRA</sequence>
<accession>C0HLK0</accession>
<reference evidence="5" key="1">
    <citation type="journal article" date="2019" name="Nat. Ecol. Evol.">
        <title>Palaeoproteomics resolves sloth relationships.</title>
        <authorList>
            <person name="Presslee S."/>
            <person name="Slater G.J."/>
            <person name="Pujos F."/>
            <person name="Forasiepi A.M."/>
            <person name="Fischer R."/>
            <person name="Molloy K."/>
            <person name="Mackie M."/>
            <person name="Olsen J.V."/>
            <person name="Kramarz A."/>
            <person name="Taglioretti M."/>
            <person name="Scaglia F."/>
            <person name="Lezcano M."/>
            <person name="Lanata J.L."/>
            <person name="Southon J."/>
            <person name="Feranec R."/>
            <person name="Bloch J."/>
            <person name="Hajduk A."/>
            <person name="Martin F.M."/>
            <person name="Salas Gismondi R."/>
            <person name="Reguero M."/>
            <person name="de Muizon C."/>
            <person name="Greenwood A."/>
            <person name="Chait B.T."/>
            <person name="Penkman K."/>
            <person name="Collins M."/>
            <person name="MacPhee R.D.E."/>
        </authorList>
    </citation>
    <scope>PROTEIN SEQUENCE</scope>
    <scope>TISSUE SPECIFICITY</scope>
    <scope>IDENTIFICATION BY MASS SPECTROMETRY</scope>
    <source>
        <tissue evidence="4">Bone</tissue>
    </source>
</reference>
<organism evidence="4">
    <name type="scientific">Paramylodon harlani</name>
    <name type="common">Harlan's ground sloth</name>
    <name type="synonym">Glossotherium harlani</name>
    <dbReference type="NCBI Taxonomy" id="2546661"/>
    <lineage>
        <taxon>Eukaryota</taxon>
        <taxon>Metazoa</taxon>
        <taxon>Chordata</taxon>
        <taxon>Craniata</taxon>
        <taxon>Vertebrata</taxon>
        <taxon>Euteleostomi</taxon>
        <taxon>Mammalia</taxon>
        <taxon>Eutheria</taxon>
        <taxon>Xenarthra</taxon>
        <taxon>Pilosa</taxon>
        <taxon>Folivora</taxon>
        <taxon>Mylodontidae</taxon>
        <taxon>Paramylodon</taxon>
    </lineage>
</organism>
<feature type="chain" id="PRO_0000448467" description="Collagen alpha-2(I) chain">
    <location>
        <begin position="1"/>
        <end position="1041"/>
    </location>
</feature>
<feature type="region of interest" description="Disordered" evidence="2">
    <location>
        <begin position="1"/>
        <end position="1041"/>
    </location>
</feature>
<feature type="compositionally biased region" description="Low complexity" evidence="2">
    <location>
        <begin position="25"/>
        <end position="45"/>
    </location>
</feature>
<feature type="compositionally biased region" description="Low complexity" evidence="2">
    <location>
        <begin position="55"/>
        <end position="76"/>
    </location>
</feature>
<feature type="compositionally biased region" description="Basic and acidic residues" evidence="2">
    <location>
        <begin position="77"/>
        <end position="91"/>
    </location>
</feature>
<feature type="compositionally biased region" description="Low complexity" evidence="2">
    <location>
        <begin position="174"/>
        <end position="189"/>
    </location>
</feature>
<feature type="compositionally biased region" description="Low complexity" evidence="2">
    <location>
        <begin position="235"/>
        <end position="256"/>
    </location>
</feature>
<feature type="compositionally biased region" description="Gly residues" evidence="2">
    <location>
        <begin position="290"/>
        <end position="299"/>
    </location>
</feature>
<feature type="compositionally biased region" description="Low complexity" evidence="2">
    <location>
        <begin position="300"/>
        <end position="310"/>
    </location>
</feature>
<feature type="compositionally biased region" description="Gly residues" evidence="2">
    <location>
        <begin position="332"/>
        <end position="341"/>
    </location>
</feature>
<feature type="compositionally biased region" description="Low complexity" evidence="2">
    <location>
        <begin position="354"/>
        <end position="370"/>
    </location>
</feature>
<feature type="compositionally biased region" description="Low complexity" evidence="2">
    <location>
        <begin position="405"/>
        <end position="424"/>
    </location>
</feature>
<feature type="compositionally biased region" description="Gly residues" evidence="2">
    <location>
        <begin position="466"/>
        <end position="475"/>
    </location>
</feature>
<feature type="compositionally biased region" description="Low complexity" evidence="2">
    <location>
        <begin position="522"/>
        <end position="539"/>
    </location>
</feature>
<feature type="compositionally biased region" description="Low complexity" evidence="2">
    <location>
        <begin position="551"/>
        <end position="561"/>
    </location>
</feature>
<feature type="compositionally biased region" description="Gly residues" evidence="2">
    <location>
        <begin position="562"/>
        <end position="571"/>
    </location>
</feature>
<feature type="compositionally biased region" description="Low complexity" evidence="2">
    <location>
        <begin position="594"/>
        <end position="638"/>
    </location>
</feature>
<feature type="compositionally biased region" description="Low complexity" evidence="2">
    <location>
        <begin position="645"/>
        <end position="665"/>
    </location>
</feature>
<feature type="compositionally biased region" description="Basic and acidic residues" evidence="2">
    <location>
        <begin position="666"/>
        <end position="675"/>
    </location>
</feature>
<feature type="compositionally biased region" description="Low complexity" evidence="2">
    <location>
        <begin position="683"/>
        <end position="693"/>
    </location>
</feature>
<feature type="compositionally biased region" description="Gly residues" evidence="2">
    <location>
        <begin position="703"/>
        <end position="712"/>
    </location>
</feature>
<feature type="compositionally biased region" description="Low complexity" evidence="2">
    <location>
        <begin position="714"/>
        <end position="723"/>
    </location>
</feature>
<feature type="compositionally biased region" description="Gly residues" evidence="2">
    <location>
        <begin position="754"/>
        <end position="768"/>
    </location>
</feature>
<feature type="compositionally biased region" description="Low complexity" evidence="2">
    <location>
        <begin position="769"/>
        <end position="803"/>
    </location>
</feature>
<feature type="compositionally biased region" description="Low complexity" evidence="2">
    <location>
        <begin position="811"/>
        <end position="821"/>
    </location>
</feature>
<feature type="compositionally biased region" description="Gly residues" evidence="2">
    <location>
        <begin position="822"/>
        <end position="840"/>
    </location>
</feature>
<feature type="compositionally biased region" description="Low complexity" evidence="2">
    <location>
        <begin position="874"/>
        <end position="887"/>
    </location>
</feature>
<feature type="compositionally biased region" description="Low complexity" evidence="2">
    <location>
        <begin position="903"/>
        <end position="918"/>
    </location>
</feature>
<feature type="compositionally biased region" description="Basic and acidic residues" evidence="2">
    <location>
        <begin position="928"/>
        <end position="939"/>
    </location>
</feature>
<feature type="compositionally biased region" description="Pro residues" evidence="2">
    <location>
        <begin position="1013"/>
        <end position="1023"/>
    </location>
</feature>
<feature type="modified residue" description="4-hydroxyproline" evidence="1">
    <location>
        <position position="10"/>
    </location>
</feature>
<feature type="modified residue" description="4-hydroxyproline" evidence="1">
    <location>
        <position position="13"/>
    </location>
</feature>
<feature type="modified residue" description="4-hydroxyproline" evidence="1">
    <location>
        <position position="39"/>
    </location>
</feature>
<feature type="modified residue" description="4-hydroxyproline" evidence="1">
    <location>
        <position position="45"/>
    </location>
</feature>
<feature type="modified residue" description="5-hydroxylysine; alternate" evidence="1">
    <location>
        <position position="113"/>
    </location>
</feature>
<feature type="modified residue" description="4-hydroxyproline" evidence="1">
    <location>
        <position position="376"/>
    </location>
</feature>
<feature type="modified residue" description="4-hydroxyproline" evidence="1">
    <location>
        <position position="379"/>
    </location>
</feature>
<feature type="glycosylation site" description="O-linked (Gal...) hydroxylysine; alternate" evidence="1">
    <location>
        <position position="113"/>
    </location>
</feature>
<feature type="unsure residue" description="L or I" evidence="4">
    <location>
        <position position="9"/>
    </location>
</feature>
<feature type="unsure residue" description="L or I" evidence="4">
    <location>
        <position position="25"/>
    </location>
</feature>
<feature type="unsure residue" description="L or I" evidence="4">
    <location>
        <position position="32"/>
    </location>
</feature>
<feature type="unsure residue" description="L or I" evidence="4">
    <location>
        <position position="109"/>
    </location>
</feature>
<feature type="unsure residue" description="I or L" evidence="4">
    <location>
        <position position="115"/>
    </location>
</feature>
<feature type="unsure residue" description="L or I" evidence="4">
    <location>
        <position position="121"/>
    </location>
</feature>
<feature type="unsure residue" description="L or I" evidence="4">
    <location>
        <position position="124"/>
    </location>
</feature>
<feature type="unsure residue" description="L or I" evidence="4">
    <location>
        <position position="154"/>
    </location>
</feature>
<feature type="unsure residue" description="I or L" evidence="4">
    <location>
        <position position="184"/>
    </location>
</feature>
<feature type="unsure residue" description="L or I" evidence="4">
    <location>
        <position position="202"/>
    </location>
</feature>
<feature type="unsure residue" description="L or I" evidence="4">
    <location>
        <position position="222"/>
    </location>
</feature>
<feature type="unsure residue" description="L or I" evidence="4">
    <location>
        <position position="240"/>
    </location>
</feature>
<feature type="unsure residue" description="L or I" evidence="4">
    <location>
        <position position="249"/>
    </location>
</feature>
<feature type="unsure residue" description="L or I" evidence="4">
    <location>
        <position position="258"/>
    </location>
</feature>
<feature type="unsure residue" description="I or L" evidence="4">
    <location>
        <position position="264"/>
    </location>
</feature>
<feature type="unsure residue" description="L or I" evidence="4">
    <location>
        <position position="279"/>
    </location>
</feature>
<feature type="unsure residue" description="L or I" evidence="4">
    <location>
        <position position="333"/>
    </location>
</feature>
<feature type="unsure residue" description="L or I" evidence="4">
    <location>
        <position position="342"/>
    </location>
</feature>
<feature type="unsure residue" description="I or L" evidence="4">
    <location>
        <position position="352"/>
    </location>
</feature>
<feature type="unsure residue" description="L or I" evidence="4">
    <location>
        <position position="381"/>
    </location>
</feature>
<feature type="unsure residue" description="L or I" evidence="4">
    <location>
        <position position="387"/>
    </location>
</feature>
<feature type="unsure residue" description="L or I" evidence="4">
    <location>
        <position position="405"/>
    </location>
</feature>
<feature type="unsure residue" description="I or L" evidence="4">
    <location>
        <position position="408"/>
    </location>
</feature>
<feature type="unsure residue" description="I or L" evidence="4">
    <location>
        <position position="415"/>
    </location>
</feature>
<feature type="unsure residue" description="I or L" evidence="4">
    <location>
        <position position="427"/>
    </location>
</feature>
<feature type="unsure residue" description="L or I" evidence="4">
    <location>
        <position position="450"/>
    </location>
</feature>
<feature type="unsure residue" description="L or I" evidence="4">
    <location>
        <position position="464"/>
    </location>
</feature>
<feature type="unsure residue" description="L or I" evidence="4">
    <location>
        <position position="485"/>
    </location>
</feature>
<feature type="unsure residue" description="I or L" evidence="4">
    <location>
        <position position="503"/>
    </location>
</feature>
<feature type="unsure residue" description="L or I" evidence="4">
    <location>
        <position position="509"/>
    </location>
</feature>
<feature type="unsure residue" description="I or L" evidence="4">
    <location>
        <position position="534"/>
    </location>
</feature>
<feature type="unsure residue" description="L or I" evidence="4">
    <location>
        <position position="569"/>
    </location>
</feature>
<feature type="unsure residue" description="I or L" evidence="4">
    <location>
        <position position="578"/>
    </location>
</feature>
<feature type="unsure residue" description="L or I" evidence="4">
    <location>
        <position position="590"/>
    </location>
</feature>
<feature type="unsure residue" description="I or L" evidence="4">
    <location>
        <position position="680"/>
    </location>
</feature>
<feature type="unsure residue" description="I or L" evidence="4">
    <location>
        <position position="731"/>
    </location>
</feature>
<feature type="unsure residue" description="L or I" evidence="4">
    <location>
        <position position="746"/>
    </location>
</feature>
<feature type="unsure residue" description="L or I" evidence="4">
    <location>
        <position position="793"/>
    </location>
</feature>
<feature type="unsure residue" description="L or I" evidence="4">
    <location>
        <position position="794"/>
    </location>
</feature>
<feature type="unsure residue" description="I or L" evidence="4">
    <location>
        <position position="799"/>
    </location>
</feature>
<feature type="unsure residue" description="L or I" evidence="4">
    <location>
        <position position="800"/>
    </location>
</feature>
<feature type="unsure residue" description="L or I" evidence="4">
    <location>
        <position position="802"/>
    </location>
</feature>
<feature type="unsure residue" description="L or I" evidence="4">
    <location>
        <position position="811"/>
    </location>
</feature>
<feature type="unsure residue" description="L or I" evidence="4">
    <location>
        <position position="824"/>
    </location>
</feature>
<feature type="unsure residue" description="I or L" evidence="4">
    <location>
        <position position="826"/>
    </location>
</feature>
<feature type="unsure residue" description="L or I" evidence="4">
    <location>
        <position position="865"/>
    </location>
</feature>
<feature type="unsure residue" description="L or I" evidence="4">
    <location>
        <position position="916"/>
    </location>
</feature>
<feature type="unsure residue" description="I or L" evidence="4">
    <location>
        <position position="927"/>
    </location>
</feature>
<feature type="unsure residue" description="L or I" evidence="4">
    <location>
        <position position="942"/>
    </location>
</feature>
<feature type="unsure residue" description="L or I" evidence="4">
    <location>
        <position position="945"/>
    </location>
</feature>
<feature type="unsure residue" description="L or I" evidence="4">
    <location>
        <position position="951"/>
    </location>
</feature>
<feature type="unsure residue" description="L or I" evidence="4">
    <location>
        <position position="954"/>
    </location>
</feature>
<feature type="unsure residue" description="L or I" evidence="4">
    <location>
        <position position="957"/>
    </location>
</feature>
<feature type="unsure residue" description="I or L" evidence="4">
    <location>
        <position position="1001"/>
    </location>
</feature>
<feature type="non-consecutive residues" evidence="4">
    <location>
        <begin position="24"/>
        <end position="25"/>
    </location>
</feature>
<feature type="non-consecutive residues" evidence="4">
    <location>
        <begin position="50"/>
        <end position="51"/>
    </location>
</feature>
<feature type="non-consecutive residues" evidence="4">
    <location>
        <begin position="168"/>
        <end position="169"/>
    </location>
</feature>
<feature type="non-consecutive residues" evidence="4">
    <location>
        <begin position="456"/>
        <end position="457"/>
    </location>
</feature>
<feature type="non-consecutive residues" evidence="4">
    <location>
        <begin position="758"/>
        <end position="759"/>
    </location>
</feature>
<feature type="non-consecutive residues" evidence="4">
    <location>
        <begin position="826"/>
        <end position="827"/>
    </location>
</feature>
<feature type="non-consecutive residues" evidence="4">
    <location>
        <begin position="838"/>
        <end position="839"/>
    </location>
</feature>
<feature type="non-consecutive residues" evidence="4">
    <location>
        <begin position="891"/>
        <end position="892"/>
    </location>
</feature>
<feature type="non-consecutive residues" evidence="4">
    <location>
        <begin position="965"/>
        <end position="966"/>
    </location>
</feature>
<feature type="non-terminal residue" evidence="4">
    <location>
        <position position="1"/>
    </location>
</feature>
<feature type="non-terminal residue" evidence="4">
    <location>
        <position position="1041"/>
    </location>
</feature>